<sequence>MTKQVEIFTDGSCLGNPGPGGYGVVLRYKQVEKTLAQGYRLTTNNRMEMMATIVALQALKEPCNVILTTDSQYVRQGITQWIHNWKKRGWKTADKKPVKNADLWQALDKETTRHTIDWRWVKGHAGHRENEMCDELARAAAENPTLDDTGYQPAE</sequence>
<organism>
    <name type="scientific">Vibrio vulnificus (strain YJ016)</name>
    <dbReference type="NCBI Taxonomy" id="196600"/>
    <lineage>
        <taxon>Bacteria</taxon>
        <taxon>Pseudomonadati</taxon>
        <taxon>Pseudomonadota</taxon>
        <taxon>Gammaproteobacteria</taxon>
        <taxon>Vibrionales</taxon>
        <taxon>Vibrionaceae</taxon>
        <taxon>Vibrio</taxon>
    </lineage>
</organism>
<protein>
    <recommendedName>
        <fullName evidence="1">Ribonuclease H</fullName>
        <shortName evidence="1">RNase H</shortName>
        <ecNumber evidence="1">3.1.26.4</ecNumber>
    </recommendedName>
</protein>
<evidence type="ECO:0000255" key="1">
    <source>
        <dbReference type="HAMAP-Rule" id="MF_00042"/>
    </source>
</evidence>
<evidence type="ECO:0000255" key="2">
    <source>
        <dbReference type="PROSITE-ProRule" id="PRU00408"/>
    </source>
</evidence>
<dbReference type="EC" id="3.1.26.4" evidence="1"/>
<dbReference type="EMBL" id="BA000037">
    <property type="protein sequence ID" value="BAC95294.1"/>
    <property type="molecule type" value="Genomic_DNA"/>
</dbReference>
<dbReference type="RefSeq" id="WP_011079787.1">
    <property type="nucleotide sequence ID" value="NC_005139.1"/>
</dbReference>
<dbReference type="SMR" id="Q7MII6"/>
<dbReference type="STRING" id="672.VV93_v1c22510"/>
<dbReference type="KEGG" id="vvy:VV2530"/>
<dbReference type="eggNOG" id="COG0328">
    <property type="taxonomic scope" value="Bacteria"/>
</dbReference>
<dbReference type="HOGENOM" id="CLU_030894_6_0_6"/>
<dbReference type="Proteomes" id="UP000002675">
    <property type="component" value="Chromosome I"/>
</dbReference>
<dbReference type="GO" id="GO:0005737">
    <property type="term" value="C:cytoplasm"/>
    <property type="evidence" value="ECO:0007669"/>
    <property type="project" value="UniProtKB-SubCell"/>
</dbReference>
<dbReference type="GO" id="GO:0000287">
    <property type="term" value="F:magnesium ion binding"/>
    <property type="evidence" value="ECO:0007669"/>
    <property type="project" value="UniProtKB-UniRule"/>
</dbReference>
<dbReference type="GO" id="GO:0003676">
    <property type="term" value="F:nucleic acid binding"/>
    <property type="evidence" value="ECO:0007669"/>
    <property type="project" value="InterPro"/>
</dbReference>
<dbReference type="GO" id="GO:0004523">
    <property type="term" value="F:RNA-DNA hybrid ribonuclease activity"/>
    <property type="evidence" value="ECO:0007669"/>
    <property type="project" value="UniProtKB-UniRule"/>
</dbReference>
<dbReference type="GO" id="GO:0043137">
    <property type="term" value="P:DNA replication, removal of RNA primer"/>
    <property type="evidence" value="ECO:0007669"/>
    <property type="project" value="TreeGrafter"/>
</dbReference>
<dbReference type="CDD" id="cd09278">
    <property type="entry name" value="RNase_HI_prokaryote_like"/>
    <property type="match status" value="1"/>
</dbReference>
<dbReference type="FunFam" id="3.30.420.10:FF:000008">
    <property type="entry name" value="Ribonuclease H"/>
    <property type="match status" value="1"/>
</dbReference>
<dbReference type="Gene3D" id="3.30.420.10">
    <property type="entry name" value="Ribonuclease H-like superfamily/Ribonuclease H"/>
    <property type="match status" value="1"/>
</dbReference>
<dbReference type="HAMAP" id="MF_00042">
    <property type="entry name" value="RNase_H"/>
    <property type="match status" value="1"/>
</dbReference>
<dbReference type="InterPro" id="IPR050092">
    <property type="entry name" value="RNase_H"/>
</dbReference>
<dbReference type="InterPro" id="IPR012337">
    <property type="entry name" value="RNaseH-like_sf"/>
</dbReference>
<dbReference type="InterPro" id="IPR002156">
    <property type="entry name" value="RNaseH_domain"/>
</dbReference>
<dbReference type="InterPro" id="IPR036397">
    <property type="entry name" value="RNaseH_sf"/>
</dbReference>
<dbReference type="InterPro" id="IPR022892">
    <property type="entry name" value="RNaseHI"/>
</dbReference>
<dbReference type="NCBIfam" id="NF001236">
    <property type="entry name" value="PRK00203.1"/>
    <property type="match status" value="1"/>
</dbReference>
<dbReference type="PANTHER" id="PTHR10642">
    <property type="entry name" value="RIBONUCLEASE H1"/>
    <property type="match status" value="1"/>
</dbReference>
<dbReference type="PANTHER" id="PTHR10642:SF26">
    <property type="entry name" value="RIBONUCLEASE H1"/>
    <property type="match status" value="1"/>
</dbReference>
<dbReference type="Pfam" id="PF00075">
    <property type="entry name" value="RNase_H"/>
    <property type="match status" value="1"/>
</dbReference>
<dbReference type="SUPFAM" id="SSF53098">
    <property type="entry name" value="Ribonuclease H-like"/>
    <property type="match status" value="1"/>
</dbReference>
<dbReference type="PROSITE" id="PS50879">
    <property type="entry name" value="RNASE_H_1"/>
    <property type="match status" value="1"/>
</dbReference>
<accession>Q7MII6</accession>
<gene>
    <name evidence="1" type="primary">rnhA</name>
    <name type="ordered locus">VV2530</name>
</gene>
<reference key="1">
    <citation type="journal article" date="2003" name="Genome Res.">
        <title>Comparative genome analysis of Vibrio vulnificus, a marine pathogen.</title>
        <authorList>
            <person name="Chen C.-Y."/>
            <person name="Wu K.-M."/>
            <person name="Chang Y.-C."/>
            <person name="Chang C.-H."/>
            <person name="Tsai H.-C."/>
            <person name="Liao T.-L."/>
            <person name="Liu Y.-M."/>
            <person name="Chen H.-J."/>
            <person name="Shen A.B.-T."/>
            <person name="Li J.-C."/>
            <person name="Su T.-L."/>
            <person name="Shao C.-P."/>
            <person name="Lee C.-T."/>
            <person name="Hor L.-I."/>
            <person name="Tsai S.-F."/>
        </authorList>
    </citation>
    <scope>NUCLEOTIDE SEQUENCE [LARGE SCALE GENOMIC DNA]</scope>
    <source>
        <strain>YJ016</strain>
    </source>
</reference>
<proteinExistence type="inferred from homology"/>
<comment type="function">
    <text evidence="1">Endonuclease that specifically degrades the RNA of RNA-DNA hybrids.</text>
</comment>
<comment type="catalytic activity">
    <reaction evidence="1">
        <text>Endonucleolytic cleavage to 5'-phosphomonoester.</text>
        <dbReference type="EC" id="3.1.26.4"/>
    </reaction>
</comment>
<comment type="cofactor">
    <cofactor evidence="1">
        <name>Mg(2+)</name>
        <dbReference type="ChEBI" id="CHEBI:18420"/>
    </cofactor>
    <text evidence="1">Binds 1 Mg(2+) ion per subunit. May bind a second metal ion at a regulatory site, or after substrate binding.</text>
</comment>
<comment type="subunit">
    <text evidence="1">Monomer.</text>
</comment>
<comment type="subcellular location">
    <subcellularLocation>
        <location evidence="1">Cytoplasm</location>
    </subcellularLocation>
</comment>
<comment type="similarity">
    <text evidence="1">Belongs to the RNase H family.</text>
</comment>
<name>RNH_VIBVY</name>
<feature type="chain" id="PRO_0000195419" description="Ribonuclease H">
    <location>
        <begin position="1"/>
        <end position="155"/>
    </location>
</feature>
<feature type="domain" description="RNase H type-1" evidence="2">
    <location>
        <begin position="1"/>
        <end position="142"/>
    </location>
</feature>
<feature type="binding site" evidence="1">
    <location>
        <position position="10"/>
    </location>
    <ligand>
        <name>Mg(2+)</name>
        <dbReference type="ChEBI" id="CHEBI:18420"/>
        <label>1</label>
    </ligand>
</feature>
<feature type="binding site" evidence="1">
    <location>
        <position position="10"/>
    </location>
    <ligand>
        <name>Mg(2+)</name>
        <dbReference type="ChEBI" id="CHEBI:18420"/>
        <label>2</label>
    </ligand>
</feature>
<feature type="binding site" evidence="1">
    <location>
        <position position="48"/>
    </location>
    <ligand>
        <name>Mg(2+)</name>
        <dbReference type="ChEBI" id="CHEBI:18420"/>
        <label>1</label>
    </ligand>
</feature>
<feature type="binding site" evidence="1">
    <location>
        <position position="70"/>
    </location>
    <ligand>
        <name>Mg(2+)</name>
        <dbReference type="ChEBI" id="CHEBI:18420"/>
        <label>1</label>
    </ligand>
</feature>
<feature type="binding site" evidence="1">
    <location>
        <position position="134"/>
    </location>
    <ligand>
        <name>Mg(2+)</name>
        <dbReference type="ChEBI" id="CHEBI:18420"/>
        <label>2</label>
    </ligand>
</feature>
<keyword id="KW-0963">Cytoplasm</keyword>
<keyword id="KW-0255">Endonuclease</keyword>
<keyword id="KW-0378">Hydrolase</keyword>
<keyword id="KW-0460">Magnesium</keyword>
<keyword id="KW-0479">Metal-binding</keyword>
<keyword id="KW-0540">Nuclease</keyword>